<feature type="chain" id="PRO_0000238252" description="ATP synthase subunit alpha">
    <location>
        <begin position="1"/>
        <end position="500"/>
    </location>
</feature>
<feature type="binding site" evidence="1">
    <location>
        <begin position="169"/>
        <end position="176"/>
    </location>
    <ligand>
        <name>ATP</name>
        <dbReference type="ChEBI" id="CHEBI:30616"/>
    </ligand>
</feature>
<feature type="site" description="Required for activity" evidence="1">
    <location>
        <position position="362"/>
    </location>
</feature>
<name>ATPA_FUSNN</name>
<keyword id="KW-0002">3D-structure</keyword>
<keyword id="KW-0066">ATP synthesis</keyword>
<keyword id="KW-0067">ATP-binding</keyword>
<keyword id="KW-0997">Cell inner membrane</keyword>
<keyword id="KW-1003">Cell membrane</keyword>
<keyword id="KW-0139">CF(1)</keyword>
<keyword id="KW-0375">Hydrogen ion transport</keyword>
<keyword id="KW-0406">Ion transport</keyword>
<keyword id="KW-0472">Membrane</keyword>
<keyword id="KW-0547">Nucleotide-binding</keyword>
<keyword id="KW-1185">Reference proteome</keyword>
<keyword id="KW-1278">Translocase</keyword>
<keyword id="KW-0813">Transport</keyword>
<comment type="function">
    <text evidence="1">Produces ATP from ADP in the presence of a proton gradient across the membrane. The alpha chain is a regulatory subunit.</text>
</comment>
<comment type="catalytic activity">
    <reaction evidence="1">
        <text>ATP + H2O + 4 H(+)(in) = ADP + phosphate + 5 H(+)(out)</text>
        <dbReference type="Rhea" id="RHEA:57720"/>
        <dbReference type="ChEBI" id="CHEBI:15377"/>
        <dbReference type="ChEBI" id="CHEBI:15378"/>
        <dbReference type="ChEBI" id="CHEBI:30616"/>
        <dbReference type="ChEBI" id="CHEBI:43474"/>
        <dbReference type="ChEBI" id="CHEBI:456216"/>
        <dbReference type="EC" id="7.1.2.2"/>
    </reaction>
</comment>
<comment type="subunit">
    <text evidence="1">F-type ATPases have 2 components, CF(1) - the catalytic core - and CF(0) - the membrane proton channel. CF(1) has five subunits: alpha(3), beta(3), gamma(1), delta(1), epsilon(1). CF(0) has three main subunits: a(1), b(2) and c(9-12). The alpha and beta chains form an alternating ring which encloses part of the gamma chain. CF(1) is attached to CF(0) by a central stalk formed by the gamma and epsilon chains, while a peripheral stalk is formed by the delta and b chains.</text>
</comment>
<comment type="subcellular location">
    <subcellularLocation>
        <location evidence="1">Cell inner membrane</location>
        <topology evidence="1">Peripheral membrane protein</topology>
    </subcellularLocation>
</comment>
<comment type="similarity">
    <text evidence="1">Belongs to the ATPase alpha/beta chains family.</text>
</comment>
<sequence length="500" mass="54767">MNIRPEEVSSIIKKEIDNYKKSLEIKTSGTVLEVGDGIARIFGLSNVMSGELLEFPHGVMGMALNLEEDNVGAVILGNASLIKEGDEVRATGKVVSVPAGEDLLGRVINALGDPIDGKGEIHVDKYMPIERKASGIIARQPVSEPLQTGIKSIDGMVPIGRGQRELIIGDRQTGKTAIAIDTIINQKGQDVKCIYVAIGQKRSTVAQIYKKLSDLGCMDYTIIVAATASEAAPLQYMAPYSGVAIGEYFMEKGEHVLIIYDDLSKHAVAYREMSLLLRRPPGREAYPGDVFYLHSRLLERAAKLSDELGGGSITALPIIETQAGDVSAYIPTNVISITDGQIFLESQLFNSGFRPAINAGISVSRVGGAAQIKAMKQVASKVKLELAQYTELLTFAQFGSDLDKATKAQLERGHRIMEILKQPQYHPFAVERQVVSFYIVINGHLDDIEVSKVRRFEKELLDYLKANTNILTEIADKKALDKDLEEKLKESIANFKKSFN</sequence>
<dbReference type="EC" id="7.1.2.2" evidence="1"/>
<dbReference type="EMBL" id="AE009951">
    <property type="protein sequence ID" value="AAL94563.1"/>
    <property type="molecule type" value="Genomic_DNA"/>
</dbReference>
<dbReference type="RefSeq" id="NP_603264.1">
    <property type="nucleotide sequence ID" value="NC_003454.1"/>
</dbReference>
<dbReference type="RefSeq" id="WP_011016337.1">
    <property type="nucleotide sequence ID" value="NZ_OZ209243.1"/>
</dbReference>
<dbReference type="PDB" id="6Q45">
    <property type="method" value="X-ray"/>
    <property type="resolution" value="3.60 A"/>
    <property type="chains" value="A/B/C/I/J/K=1-500"/>
</dbReference>
<dbReference type="PDBsum" id="6Q45"/>
<dbReference type="SMR" id="Q8RGE0"/>
<dbReference type="DIP" id="DIP-60174N"/>
<dbReference type="FunCoup" id="Q8RGE0">
    <property type="interactions" value="331"/>
</dbReference>
<dbReference type="IntAct" id="Q8RGE0">
    <property type="interactions" value="4"/>
</dbReference>
<dbReference type="STRING" id="190304.FN0360"/>
<dbReference type="PaxDb" id="190304-FN0360"/>
<dbReference type="EnsemblBacteria" id="AAL94563">
    <property type="protein sequence ID" value="AAL94563"/>
    <property type="gene ID" value="FN0360"/>
</dbReference>
<dbReference type="GeneID" id="79783369"/>
<dbReference type="KEGG" id="fnu:FN0360"/>
<dbReference type="PATRIC" id="fig|190304.8.peg.937"/>
<dbReference type="eggNOG" id="COG0056">
    <property type="taxonomic scope" value="Bacteria"/>
</dbReference>
<dbReference type="HOGENOM" id="CLU_010091_2_1_0"/>
<dbReference type="InParanoid" id="Q8RGE0"/>
<dbReference type="BioCyc" id="FNUC190304:G1FZS-957-MONOMER"/>
<dbReference type="Proteomes" id="UP000002521">
    <property type="component" value="Chromosome"/>
</dbReference>
<dbReference type="GO" id="GO:0005886">
    <property type="term" value="C:plasma membrane"/>
    <property type="evidence" value="ECO:0007669"/>
    <property type="project" value="UniProtKB-SubCell"/>
</dbReference>
<dbReference type="GO" id="GO:0045259">
    <property type="term" value="C:proton-transporting ATP synthase complex"/>
    <property type="evidence" value="ECO:0007669"/>
    <property type="project" value="UniProtKB-KW"/>
</dbReference>
<dbReference type="GO" id="GO:0043531">
    <property type="term" value="F:ADP binding"/>
    <property type="evidence" value="ECO:0000318"/>
    <property type="project" value="GO_Central"/>
</dbReference>
<dbReference type="GO" id="GO:0005524">
    <property type="term" value="F:ATP binding"/>
    <property type="evidence" value="ECO:0000318"/>
    <property type="project" value="GO_Central"/>
</dbReference>
<dbReference type="GO" id="GO:0046933">
    <property type="term" value="F:proton-transporting ATP synthase activity, rotational mechanism"/>
    <property type="evidence" value="ECO:0007669"/>
    <property type="project" value="UniProtKB-UniRule"/>
</dbReference>
<dbReference type="GO" id="GO:0015986">
    <property type="term" value="P:proton motive force-driven ATP synthesis"/>
    <property type="evidence" value="ECO:0000318"/>
    <property type="project" value="GO_Central"/>
</dbReference>
<dbReference type="CDD" id="cd18113">
    <property type="entry name" value="ATP-synt_F1_alpha_C"/>
    <property type="match status" value="1"/>
</dbReference>
<dbReference type="CDD" id="cd18116">
    <property type="entry name" value="ATP-synt_F1_alpha_N"/>
    <property type="match status" value="1"/>
</dbReference>
<dbReference type="CDD" id="cd01132">
    <property type="entry name" value="F1-ATPase_alpha_CD"/>
    <property type="match status" value="1"/>
</dbReference>
<dbReference type="FunFam" id="1.20.150.20:FF:000001">
    <property type="entry name" value="ATP synthase subunit alpha"/>
    <property type="match status" value="1"/>
</dbReference>
<dbReference type="FunFam" id="2.40.30.20:FF:000001">
    <property type="entry name" value="ATP synthase subunit alpha"/>
    <property type="match status" value="1"/>
</dbReference>
<dbReference type="FunFam" id="3.40.50.300:FF:000002">
    <property type="entry name" value="ATP synthase subunit alpha"/>
    <property type="match status" value="1"/>
</dbReference>
<dbReference type="Gene3D" id="2.40.30.20">
    <property type="match status" value="1"/>
</dbReference>
<dbReference type="Gene3D" id="1.20.150.20">
    <property type="entry name" value="ATP synthase alpha/beta chain, C-terminal domain"/>
    <property type="match status" value="1"/>
</dbReference>
<dbReference type="Gene3D" id="3.40.50.300">
    <property type="entry name" value="P-loop containing nucleotide triphosphate hydrolases"/>
    <property type="match status" value="1"/>
</dbReference>
<dbReference type="HAMAP" id="MF_01346">
    <property type="entry name" value="ATP_synth_alpha_bact"/>
    <property type="match status" value="1"/>
</dbReference>
<dbReference type="InterPro" id="IPR023366">
    <property type="entry name" value="ATP_synth_asu-like_sf"/>
</dbReference>
<dbReference type="InterPro" id="IPR000793">
    <property type="entry name" value="ATP_synth_asu_C"/>
</dbReference>
<dbReference type="InterPro" id="IPR038376">
    <property type="entry name" value="ATP_synth_asu_C_sf"/>
</dbReference>
<dbReference type="InterPro" id="IPR033732">
    <property type="entry name" value="ATP_synth_F1_a_nt-bd_dom"/>
</dbReference>
<dbReference type="InterPro" id="IPR005294">
    <property type="entry name" value="ATP_synth_F1_asu"/>
</dbReference>
<dbReference type="InterPro" id="IPR020003">
    <property type="entry name" value="ATPase_a/bsu_AS"/>
</dbReference>
<dbReference type="InterPro" id="IPR004100">
    <property type="entry name" value="ATPase_F1/V1/A1_a/bsu_N"/>
</dbReference>
<dbReference type="InterPro" id="IPR036121">
    <property type="entry name" value="ATPase_F1/V1/A1_a/bsu_N_sf"/>
</dbReference>
<dbReference type="InterPro" id="IPR000194">
    <property type="entry name" value="ATPase_F1/V1/A1_a/bsu_nucl-bd"/>
</dbReference>
<dbReference type="InterPro" id="IPR027417">
    <property type="entry name" value="P-loop_NTPase"/>
</dbReference>
<dbReference type="NCBIfam" id="TIGR00962">
    <property type="entry name" value="atpA"/>
    <property type="match status" value="1"/>
</dbReference>
<dbReference type="NCBIfam" id="NF009884">
    <property type="entry name" value="PRK13343.1"/>
    <property type="match status" value="1"/>
</dbReference>
<dbReference type="PANTHER" id="PTHR48082">
    <property type="entry name" value="ATP SYNTHASE SUBUNIT ALPHA, MITOCHONDRIAL"/>
    <property type="match status" value="1"/>
</dbReference>
<dbReference type="PANTHER" id="PTHR48082:SF2">
    <property type="entry name" value="ATP SYNTHASE SUBUNIT ALPHA, MITOCHONDRIAL"/>
    <property type="match status" value="1"/>
</dbReference>
<dbReference type="Pfam" id="PF00006">
    <property type="entry name" value="ATP-synt_ab"/>
    <property type="match status" value="1"/>
</dbReference>
<dbReference type="Pfam" id="PF00306">
    <property type="entry name" value="ATP-synt_ab_C"/>
    <property type="match status" value="1"/>
</dbReference>
<dbReference type="Pfam" id="PF02874">
    <property type="entry name" value="ATP-synt_ab_N"/>
    <property type="match status" value="1"/>
</dbReference>
<dbReference type="PIRSF" id="PIRSF039088">
    <property type="entry name" value="F_ATPase_subunit_alpha"/>
    <property type="match status" value="1"/>
</dbReference>
<dbReference type="SUPFAM" id="SSF47917">
    <property type="entry name" value="C-terminal domain of alpha and beta subunits of F1 ATP synthase"/>
    <property type="match status" value="1"/>
</dbReference>
<dbReference type="SUPFAM" id="SSF50615">
    <property type="entry name" value="N-terminal domain of alpha and beta subunits of F1 ATP synthase"/>
    <property type="match status" value="1"/>
</dbReference>
<dbReference type="SUPFAM" id="SSF52540">
    <property type="entry name" value="P-loop containing nucleoside triphosphate hydrolases"/>
    <property type="match status" value="1"/>
</dbReference>
<dbReference type="PROSITE" id="PS00152">
    <property type="entry name" value="ATPASE_ALPHA_BETA"/>
    <property type="match status" value="1"/>
</dbReference>
<proteinExistence type="evidence at protein level"/>
<reference key="1">
    <citation type="journal article" date="2002" name="J. Bacteriol.">
        <title>Genome sequence and analysis of the oral bacterium Fusobacterium nucleatum strain ATCC 25586.</title>
        <authorList>
            <person name="Kapatral V."/>
            <person name="Anderson I."/>
            <person name="Ivanova N."/>
            <person name="Reznik G."/>
            <person name="Los T."/>
            <person name="Lykidis A."/>
            <person name="Bhattacharyya A."/>
            <person name="Bartman A."/>
            <person name="Gardner W."/>
            <person name="Grechkin G."/>
            <person name="Zhu L."/>
            <person name="Vasieva O."/>
            <person name="Chu L."/>
            <person name="Kogan Y."/>
            <person name="Chaga O."/>
            <person name="Goltsman E."/>
            <person name="Bernal A."/>
            <person name="Larsen N."/>
            <person name="D'Souza M."/>
            <person name="Walunas T."/>
            <person name="Pusch G."/>
            <person name="Haselkorn R."/>
            <person name="Fonstein M."/>
            <person name="Kyrpides N.C."/>
            <person name="Overbeek R."/>
        </authorList>
    </citation>
    <scope>NUCLEOTIDE SEQUENCE [LARGE SCALE GENOMIC DNA]</scope>
    <source>
        <strain>ATCC 25586 / DSM 15643 / BCRC 10681 / CIP 101130 / JCM 8532 / KCTC 2640 / LMG 13131 / VPI 4355</strain>
    </source>
</reference>
<accession>Q8RGE0</accession>
<protein>
    <recommendedName>
        <fullName evidence="1">ATP synthase subunit alpha</fullName>
        <ecNumber evidence="1">7.1.2.2</ecNumber>
    </recommendedName>
    <alternativeName>
        <fullName evidence="1">ATP synthase F1 sector subunit alpha</fullName>
    </alternativeName>
    <alternativeName>
        <fullName evidence="1">F-ATPase subunit alpha</fullName>
    </alternativeName>
</protein>
<evidence type="ECO:0000255" key="1">
    <source>
        <dbReference type="HAMAP-Rule" id="MF_01346"/>
    </source>
</evidence>
<gene>
    <name evidence="1" type="primary">atpA</name>
    <name type="ordered locus">FN0360</name>
</gene>
<organism>
    <name type="scientific">Fusobacterium nucleatum subsp. nucleatum (strain ATCC 25586 / DSM 15643 / BCRC 10681 / CIP 101130 / JCM 8532 / KCTC 2640 / LMG 13131 / VPI 4355)</name>
    <dbReference type="NCBI Taxonomy" id="190304"/>
    <lineage>
        <taxon>Bacteria</taxon>
        <taxon>Fusobacteriati</taxon>
        <taxon>Fusobacteriota</taxon>
        <taxon>Fusobacteriia</taxon>
        <taxon>Fusobacteriales</taxon>
        <taxon>Fusobacteriaceae</taxon>
        <taxon>Fusobacterium</taxon>
    </lineage>
</organism>